<feature type="chain" id="PRO_1000008578" description="4-hydroxy-tetrahydrodipicolinate reductase">
    <location>
        <begin position="1"/>
        <end position="258"/>
    </location>
</feature>
<feature type="active site" description="Proton donor/acceptor" evidence="1">
    <location>
        <position position="148"/>
    </location>
</feature>
<feature type="active site" description="Proton donor" evidence="1">
    <location>
        <position position="152"/>
    </location>
</feature>
<feature type="binding site" evidence="1">
    <location>
        <begin position="9"/>
        <end position="14"/>
    </location>
    <ligand>
        <name>NAD(+)</name>
        <dbReference type="ChEBI" id="CHEBI:57540"/>
    </ligand>
</feature>
<feature type="binding site" evidence="1">
    <location>
        <begin position="91"/>
        <end position="93"/>
    </location>
    <ligand>
        <name>NAD(+)</name>
        <dbReference type="ChEBI" id="CHEBI:57540"/>
    </ligand>
</feature>
<feature type="binding site" evidence="1">
    <location>
        <begin position="115"/>
        <end position="118"/>
    </location>
    <ligand>
        <name>NAD(+)</name>
        <dbReference type="ChEBI" id="CHEBI:57540"/>
    </ligand>
</feature>
<feature type="binding site" evidence="1">
    <location>
        <position position="149"/>
    </location>
    <ligand>
        <name>(S)-2,3,4,5-tetrahydrodipicolinate</name>
        <dbReference type="ChEBI" id="CHEBI:16845"/>
    </ligand>
</feature>
<feature type="binding site" evidence="1">
    <location>
        <begin position="158"/>
        <end position="159"/>
    </location>
    <ligand>
        <name>(S)-2,3,4,5-tetrahydrodipicolinate</name>
        <dbReference type="ChEBI" id="CHEBI:16845"/>
    </ligand>
</feature>
<organism>
    <name type="scientific">Lawsonia intracellularis (strain PHE/MN1-00)</name>
    <dbReference type="NCBI Taxonomy" id="363253"/>
    <lineage>
        <taxon>Bacteria</taxon>
        <taxon>Pseudomonadati</taxon>
        <taxon>Thermodesulfobacteriota</taxon>
        <taxon>Desulfovibrionia</taxon>
        <taxon>Desulfovibrionales</taxon>
        <taxon>Desulfovibrionaceae</taxon>
        <taxon>Lawsonia</taxon>
    </lineage>
</organism>
<proteinExistence type="inferred from homology"/>
<gene>
    <name evidence="1" type="primary">dapB</name>
    <name type="ordered locus">LI0243</name>
</gene>
<sequence>MDLSIIVIGASGRMGKTIIQVAQEQGIIIDAVIDRPTRLTSLASYNIASDSEPDKIFSRYPQAVVIDFTTPETSISMAQVAQKYGNPIIIGTTGFTLEQFDTLETLAKTSRIFWSPNMSIGINVLLKTLPQMAQILGNEYNIEIVEVHHNKKKDAPSGTAMRIAETLSTSRHWDLEKVACYNREGIVGERPQEQIGIQTIRGGDVVGVHTIYFIGPGERIEITHQADSRKNFAQGALKAAEWIIKQKAGRLYTMMDII</sequence>
<reference key="1">
    <citation type="submission" date="2005-11" db="EMBL/GenBank/DDBJ databases">
        <title>The complete genome sequence of Lawsonia intracellularis: the causative agent of proliferative enteropathy.</title>
        <authorList>
            <person name="Kaur K."/>
            <person name="Zhang Q."/>
            <person name="Beckler D."/>
            <person name="Munir S."/>
            <person name="Li L."/>
            <person name="Kinsley K."/>
            <person name="Herron L."/>
            <person name="Peterson A."/>
            <person name="May B."/>
            <person name="Singh S."/>
            <person name="Gebhart C."/>
            <person name="Kapur V."/>
        </authorList>
    </citation>
    <scope>NUCLEOTIDE SEQUENCE [LARGE SCALE GENOMIC DNA]</scope>
    <source>
        <strain>PHE/MN1-00</strain>
    </source>
</reference>
<dbReference type="EC" id="1.17.1.8" evidence="1"/>
<dbReference type="EMBL" id="AM180252">
    <property type="protein sequence ID" value="CAJ54299.1"/>
    <property type="molecule type" value="Genomic_DNA"/>
</dbReference>
<dbReference type="RefSeq" id="WP_011526325.1">
    <property type="nucleotide sequence ID" value="NC_008011.1"/>
</dbReference>
<dbReference type="SMR" id="Q1MRS7"/>
<dbReference type="STRING" id="363253.LI0243"/>
<dbReference type="KEGG" id="lip:LI0243"/>
<dbReference type="eggNOG" id="COG0289">
    <property type="taxonomic scope" value="Bacteria"/>
</dbReference>
<dbReference type="HOGENOM" id="CLU_047479_2_1_7"/>
<dbReference type="OrthoDB" id="9790352at2"/>
<dbReference type="UniPathway" id="UPA00034">
    <property type="reaction ID" value="UER00018"/>
</dbReference>
<dbReference type="Proteomes" id="UP000002430">
    <property type="component" value="Chromosome"/>
</dbReference>
<dbReference type="GO" id="GO:0005737">
    <property type="term" value="C:cytoplasm"/>
    <property type="evidence" value="ECO:0007669"/>
    <property type="project" value="UniProtKB-SubCell"/>
</dbReference>
<dbReference type="GO" id="GO:0008839">
    <property type="term" value="F:4-hydroxy-tetrahydrodipicolinate reductase"/>
    <property type="evidence" value="ECO:0007669"/>
    <property type="project" value="UniProtKB-EC"/>
</dbReference>
<dbReference type="GO" id="GO:0051287">
    <property type="term" value="F:NAD binding"/>
    <property type="evidence" value="ECO:0007669"/>
    <property type="project" value="UniProtKB-UniRule"/>
</dbReference>
<dbReference type="GO" id="GO:0050661">
    <property type="term" value="F:NADP binding"/>
    <property type="evidence" value="ECO:0007669"/>
    <property type="project" value="UniProtKB-UniRule"/>
</dbReference>
<dbReference type="GO" id="GO:0016726">
    <property type="term" value="F:oxidoreductase activity, acting on CH or CH2 groups, NAD or NADP as acceptor"/>
    <property type="evidence" value="ECO:0007669"/>
    <property type="project" value="UniProtKB-UniRule"/>
</dbReference>
<dbReference type="GO" id="GO:0019877">
    <property type="term" value="P:diaminopimelate biosynthetic process"/>
    <property type="evidence" value="ECO:0007669"/>
    <property type="project" value="UniProtKB-UniRule"/>
</dbReference>
<dbReference type="GO" id="GO:0009089">
    <property type="term" value="P:lysine biosynthetic process via diaminopimelate"/>
    <property type="evidence" value="ECO:0007669"/>
    <property type="project" value="UniProtKB-UniRule"/>
</dbReference>
<dbReference type="CDD" id="cd02274">
    <property type="entry name" value="DHDPR_N"/>
    <property type="match status" value="1"/>
</dbReference>
<dbReference type="FunFam" id="3.30.360.10:FF:000004">
    <property type="entry name" value="4-hydroxy-tetrahydrodipicolinate reductase"/>
    <property type="match status" value="1"/>
</dbReference>
<dbReference type="Gene3D" id="3.30.360.10">
    <property type="entry name" value="Dihydrodipicolinate Reductase, domain 2"/>
    <property type="match status" value="1"/>
</dbReference>
<dbReference type="Gene3D" id="3.40.50.720">
    <property type="entry name" value="NAD(P)-binding Rossmann-like Domain"/>
    <property type="match status" value="1"/>
</dbReference>
<dbReference type="HAMAP" id="MF_00102">
    <property type="entry name" value="DapB"/>
    <property type="match status" value="1"/>
</dbReference>
<dbReference type="InterPro" id="IPR022663">
    <property type="entry name" value="DapB_C"/>
</dbReference>
<dbReference type="InterPro" id="IPR000846">
    <property type="entry name" value="DapB_N"/>
</dbReference>
<dbReference type="InterPro" id="IPR022664">
    <property type="entry name" value="DapB_N_CS"/>
</dbReference>
<dbReference type="InterPro" id="IPR023940">
    <property type="entry name" value="DHDPR_bac"/>
</dbReference>
<dbReference type="InterPro" id="IPR036291">
    <property type="entry name" value="NAD(P)-bd_dom_sf"/>
</dbReference>
<dbReference type="NCBIfam" id="TIGR00036">
    <property type="entry name" value="dapB"/>
    <property type="match status" value="1"/>
</dbReference>
<dbReference type="PANTHER" id="PTHR20836:SF0">
    <property type="entry name" value="4-HYDROXY-TETRAHYDRODIPICOLINATE REDUCTASE 1, CHLOROPLASTIC-RELATED"/>
    <property type="match status" value="1"/>
</dbReference>
<dbReference type="PANTHER" id="PTHR20836">
    <property type="entry name" value="DIHYDRODIPICOLINATE REDUCTASE"/>
    <property type="match status" value="1"/>
</dbReference>
<dbReference type="Pfam" id="PF05173">
    <property type="entry name" value="DapB_C"/>
    <property type="match status" value="1"/>
</dbReference>
<dbReference type="Pfam" id="PF01113">
    <property type="entry name" value="DapB_N"/>
    <property type="match status" value="1"/>
</dbReference>
<dbReference type="PIRSF" id="PIRSF000161">
    <property type="entry name" value="DHPR"/>
    <property type="match status" value="1"/>
</dbReference>
<dbReference type="SUPFAM" id="SSF55347">
    <property type="entry name" value="Glyceraldehyde-3-phosphate dehydrogenase-like, C-terminal domain"/>
    <property type="match status" value="1"/>
</dbReference>
<dbReference type="SUPFAM" id="SSF51735">
    <property type="entry name" value="NAD(P)-binding Rossmann-fold domains"/>
    <property type="match status" value="1"/>
</dbReference>
<dbReference type="PROSITE" id="PS01298">
    <property type="entry name" value="DAPB"/>
    <property type="match status" value="1"/>
</dbReference>
<comment type="function">
    <text evidence="1">Catalyzes the conversion of 4-hydroxy-tetrahydrodipicolinate (HTPA) to tetrahydrodipicolinate.</text>
</comment>
<comment type="catalytic activity">
    <reaction evidence="1">
        <text>(S)-2,3,4,5-tetrahydrodipicolinate + NAD(+) + H2O = (2S,4S)-4-hydroxy-2,3,4,5-tetrahydrodipicolinate + NADH + H(+)</text>
        <dbReference type="Rhea" id="RHEA:35323"/>
        <dbReference type="ChEBI" id="CHEBI:15377"/>
        <dbReference type="ChEBI" id="CHEBI:15378"/>
        <dbReference type="ChEBI" id="CHEBI:16845"/>
        <dbReference type="ChEBI" id="CHEBI:57540"/>
        <dbReference type="ChEBI" id="CHEBI:57945"/>
        <dbReference type="ChEBI" id="CHEBI:67139"/>
        <dbReference type="EC" id="1.17.1.8"/>
    </reaction>
</comment>
<comment type="catalytic activity">
    <reaction evidence="1">
        <text>(S)-2,3,4,5-tetrahydrodipicolinate + NADP(+) + H2O = (2S,4S)-4-hydroxy-2,3,4,5-tetrahydrodipicolinate + NADPH + H(+)</text>
        <dbReference type="Rhea" id="RHEA:35331"/>
        <dbReference type="ChEBI" id="CHEBI:15377"/>
        <dbReference type="ChEBI" id="CHEBI:15378"/>
        <dbReference type="ChEBI" id="CHEBI:16845"/>
        <dbReference type="ChEBI" id="CHEBI:57783"/>
        <dbReference type="ChEBI" id="CHEBI:58349"/>
        <dbReference type="ChEBI" id="CHEBI:67139"/>
        <dbReference type="EC" id="1.17.1.8"/>
    </reaction>
</comment>
<comment type="pathway">
    <text evidence="1">Amino-acid biosynthesis; L-lysine biosynthesis via DAP pathway; (S)-tetrahydrodipicolinate from L-aspartate: step 4/4.</text>
</comment>
<comment type="subcellular location">
    <subcellularLocation>
        <location evidence="1">Cytoplasm</location>
    </subcellularLocation>
</comment>
<comment type="similarity">
    <text evidence="1">Belongs to the DapB family.</text>
</comment>
<comment type="caution">
    <text evidence="2">Was originally thought to be a dihydrodipicolinate reductase (DHDPR), catalyzing the conversion of dihydrodipicolinate to tetrahydrodipicolinate. However, it was shown in E.coli that the substrate of the enzymatic reaction is not dihydrodipicolinate (DHDP) but in fact (2S,4S)-4-hydroxy-2,3,4,5-tetrahydrodipicolinic acid (HTPA), the product released by the DapA-catalyzed reaction.</text>
</comment>
<accession>Q1MRS7</accession>
<name>DAPB_LAWIP</name>
<keyword id="KW-0028">Amino-acid biosynthesis</keyword>
<keyword id="KW-0963">Cytoplasm</keyword>
<keyword id="KW-0220">Diaminopimelate biosynthesis</keyword>
<keyword id="KW-0457">Lysine biosynthesis</keyword>
<keyword id="KW-0520">NAD</keyword>
<keyword id="KW-0521">NADP</keyword>
<keyword id="KW-0560">Oxidoreductase</keyword>
<keyword id="KW-1185">Reference proteome</keyword>
<protein>
    <recommendedName>
        <fullName evidence="1">4-hydroxy-tetrahydrodipicolinate reductase</fullName>
        <shortName evidence="1">HTPA reductase</shortName>
        <ecNumber evidence="1">1.17.1.8</ecNumber>
    </recommendedName>
</protein>
<evidence type="ECO:0000255" key="1">
    <source>
        <dbReference type="HAMAP-Rule" id="MF_00102"/>
    </source>
</evidence>
<evidence type="ECO:0000305" key="2"/>